<name>ATPG_LIMRD</name>
<comment type="function">
    <text evidence="1">Produces ATP from ADP in the presence of a proton gradient across the membrane. The gamma chain is believed to be important in regulating ATPase activity and the flow of protons through the CF(0) complex.</text>
</comment>
<comment type="subunit">
    <text evidence="1">F-type ATPases have 2 components, CF(1) - the catalytic core - and CF(0) - the membrane proton channel. CF(1) has five subunits: alpha(3), beta(3), gamma(1), delta(1), epsilon(1). CF(0) has three main subunits: a, b and c.</text>
</comment>
<comment type="subcellular location">
    <subcellularLocation>
        <location evidence="1">Cell membrane</location>
        <topology evidence="1">Peripheral membrane protein</topology>
    </subcellularLocation>
</comment>
<comment type="similarity">
    <text evidence="1">Belongs to the ATPase gamma chain family.</text>
</comment>
<proteinExistence type="inferred from homology"/>
<keyword id="KW-0066">ATP synthesis</keyword>
<keyword id="KW-1003">Cell membrane</keyword>
<keyword id="KW-0139">CF(1)</keyword>
<keyword id="KW-0375">Hydrogen ion transport</keyword>
<keyword id="KW-0406">Ion transport</keyword>
<keyword id="KW-0472">Membrane</keyword>
<keyword id="KW-1185">Reference proteome</keyword>
<keyword id="KW-0813">Transport</keyword>
<organism>
    <name type="scientific">Limosilactobacillus reuteri (strain DSM 20016)</name>
    <name type="common">Lactobacillus reuteri</name>
    <dbReference type="NCBI Taxonomy" id="557436"/>
    <lineage>
        <taxon>Bacteria</taxon>
        <taxon>Bacillati</taxon>
        <taxon>Bacillota</taxon>
        <taxon>Bacilli</taxon>
        <taxon>Lactobacillales</taxon>
        <taxon>Lactobacillaceae</taxon>
        <taxon>Limosilactobacillus</taxon>
    </lineage>
</organism>
<protein>
    <recommendedName>
        <fullName evidence="1">ATP synthase gamma chain</fullName>
    </recommendedName>
    <alternativeName>
        <fullName evidence="1">ATP synthase F1 sector gamma subunit</fullName>
    </alternativeName>
    <alternativeName>
        <fullName evidence="1">F-ATPase gamma subunit</fullName>
    </alternativeName>
</protein>
<sequence length="314" mass="34796">MPASLAAVKHKIDSTKSTRQITSAMQMVSTAKLNQIQHHTQTYEVYAEKVKQMLSDLVKSHSATSAASQDDVYAALFKKRAVKKTGVLVITSDRGLVGSYNSNIIKQTLDMMAKHNLDKDNTVFLTVGKTGTEFFKKRGMNVVYEYSGVSDVPTYREVHSIVKTAVQMYSDQVFDEMYMVYSHYVNRITSNVIVHDVLPITEKSLLDDENEAQENTELNNSDVSTAHVSAEYEFEPSDTEIISALVAQYAESLIYGAILDAKTSEHSSSANAMRSATDNADDIISTLELQYNRARQAAITTEITEITGGMTAQE</sequence>
<gene>
    <name evidence="1" type="primary">atpG</name>
    <name type="ordered locus">Lreu_0466</name>
</gene>
<reference key="1">
    <citation type="journal article" date="2011" name="PLoS Genet.">
        <title>The evolution of host specialization in the vertebrate gut symbiont Lactobacillus reuteri.</title>
        <authorList>
            <person name="Frese S.A."/>
            <person name="Benson A.K."/>
            <person name="Tannock G.W."/>
            <person name="Loach D.M."/>
            <person name="Kim J."/>
            <person name="Zhang M."/>
            <person name="Oh P.L."/>
            <person name="Heng N.C."/>
            <person name="Patil P.B."/>
            <person name="Juge N."/>
            <person name="Mackenzie D.A."/>
            <person name="Pearson B.M."/>
            <person name="Lapidus A."/>
            <person name="Dalin E."/>
            <person name="Tice H."/>
            <person name="Goltsman E."/>
            <person name="Land M."/>
            <person name="Hauser L."/>
            <person name="Ivanova N."/>
            <person name="Kyrpides N.C."/>
            <person name="Walter J."/>
        </authorList>
    </citation>
    <scope>NUCLEOTIDE SEQUENCE [LARGE SCALE GENOMIC DNA]</scope>
    <source>
        <strain>DSM 20016</strain>
    </source>
</reference>
<accession>A5VIR0</accession>
<evidence type="ECO:0000255" key="1">
    <source>
        <dbReference type="HAMAP-Rule" id="MF_00815"/>
    </source>
</evidence>
<feature type="chain" id="PRO_1000134168" description="ATP synthase gamma chain">
    <location>
        <begin position="1"/>
        <end position="314"/>
    </location>
</feature>
<dbReference type="EMBL" id="CP000705">
    <property type="protein sequence ID" value="ABQ82734.1"/>
    <property type="molecule type" value="Genomic_DNA"/>
</dbReference>
<dbReference type="RefSeq" id="WP_003666570.1">
    <property type="nucleotide sequence ID" value="NZ_AZDD01000022.1"/>
</dbReference>
<dbReference type="SMR" id="A5VIR0"/>
<dbReference type="STRING" id="557436.Lreu_0466"/>
<dbReference type="KEGG" id="lre:Lreu_0466"/>
<dbReference type="PATRIC" id="fig|557436.17.peg.842"/>
<dbReference type="eggNOG" id="COG0224">
    <property type="taxonomic scope" value="Bacteria"/>
</dbReference>
<dbReference type="HOGENOM" id="CLU_050669_0_1_9"/>
<dbReference type="OMA" id="MQITSAM"/>
<dbReference type="Proteomes" id="UP000001991">
    <property type="component" value="Chromosome"/>
</dbReference>
<dbReference type="GO" id="GO:0005886">
    <property type="term" value="C:plasma membrane"/>
    <property type="evidence" value="ECO:0007669"/>
    <property type="project" value="UniProtKB-SubCell"/>
</dbReference>
<dbReference type="GO" id="GO:0045259">
    <property type="term" value="C:proton-transporting ATP synthase complex"/>
    <property type="evidence" value="ECO:0007669"/>
    <property type="project" value="UniProtKB-KW"/>
</dbReference>
<dbReference type="GO" id="GO:0005524">
    <property type="term" value="F:ATP binding"/>
    <property type="evidence" value="ECO:0007669"/>
    <property type="project" value="UniProtKB-UniRule"/>
</dbReference>
<dbReference type="GO" id="GO:0046933">
    <property type="term" value="F:proton-transporting ATP synthase activity, rotational mechanism"/>
    <property type="evidence" value="ECO:0007669"/>
    <property type="project" value="UniProtKB-UniRule"/>
</dbReference>
<dbReference type="GO" id="GO:0042777">
    <property type="term" value="P:proton motive force-driven plasma membrane ATP synthesis"/>
    <property type="evidence" value="ECO:0007669"/>
    <property type="project" value="UniProtKB-UniRule"/>
</dbReference>
<dbReference type="CDD" id="cd12151">
    <property type="entry name" value="F1-ATPase_gamma"/>
    <property type="match status" value="1"/>
</dbReference>
<dbReference type="Gene3D" id="3.40.1380.10">
    <property type="match status" value="1"/>
</dbReference>
<dbReference type="Gene3D" id="1.10.287.80">
    <property type="entry name" value="ATP synthase, gamma subunit, helix hairpin domain"/>
    <property type="match status" value="2"/>
</dbReference>
<dbReference type="HAMAP" id="MF_00815">
    <property type="entry name" value="ATP_synth_gamma_bact"/>
    <property type="match status" value="1"/>
</dbReference>
<dbReference type="InterPro" id="IPR035968">
    <property type="entry name" value="ATP_synth_F1_ATPase_gsu"/>
</dbReference>
<dbReference type="InterPro" id="IPR000131">
    <property type="entry name" value="ATP_synth_F1_gsu"/>
</dbReference>
<dbReference type="NCBIfam" id="TIGR01146">
    <property type="entry name" value="ATPsyn_F1gamma"/>
    <property type="match status" value="1"/>
</dbReference>
<dbReference type="NCBIfam" id="NF004147">
    <property type="entry name" value="PRK05621.2-1"/>
    <property type="match status" value="1"/>
</dbReference>
<dbReference type="PANTHER" id="PTHR11693">
    <property type="entry name" value="ATP SYNTHASE GAMMA CHAIN"/>
    <property type="match status" value="1"/>
</dbReference>
<dbReference type="PANTHER" id="PTHR11693:SF22">
    <property type="entry name" value="ATP SYNTHASE SUBUNIT GAMMA, MITOCHONDRIAL"/>
    <property type="match status" value="1"/>
</dbReference>
<dbReference type="Pfam" id="PF00231">
    <property type="entry name" value="ATP-synt"/>
    <property type="match status" value="1"/>
</dbReference>
<dbReference type="PRINTS" id="PR00126">
    <property type="entry name" value="ATPASEGAMMA"/>
</dbReference>
<dbReference type="SUPFAM" id="SSF52943">
    <property type="entry name" value="ATP synthase (F1-ATPase), gamma subunit"/>
    <property type="match status" value="1"/>
</dbReference>